<organism>
    <name type="scientific">Homo sapiens</name>
    <name type="common">Human</name>
    <dbReference type="NCBI Taxonomy" id="9606"/>
    <lineage>
        <taxon>Eukaryota</taxon>
        <taxon>Metazoa</taxon>
        <taxon>Chordata</taxon>
        <taxon>Craniata</taxon>
        <taxon>Vertebrata</taxon>
        <taxon>Euteleostomi</taxon>
        <taxon>Mammalia</taxon>
        <taxon>Eutheria</taxon>
        <taxon>Euarchontoglires</taxon>
        <taxon>Primates</taxon>
        <taxon>Haplorrhini</taxon>
        <taxon>Catarrhini</taxon>
        <taxon>Hominidae</taxon>
        <taxon>Homo</taxon>
    </lineage>
</organism>
<protein>
    <recommendedName>
        <fullName>Fructose-bisphosphate aldolase B</fullName>
        <ecNumber evidence="5 6 11">4.1.2.13</ecNumber>
    </recommendedName>
    <alternativeName>
        <fullName>Liver-type aldolase</fullName>
    </alternativeName>
</protein>
<comment type="function">
    <text evidence="5 6 11 15">Catalyzes the aldol cleavage of fructose 1,6-biphosphate to form two triosephosphates dihydroxyacetone phosphate and D-glyceraldehyde 3-phosphate in glycolysis as well as the reverse stereospecific aldol addition reaction in gluconeogenesis. In fructolysis, metabolizes fructose 1-phosphate derived from the phosphorylation of dietary fructose by fructokinase into dihydroxyacetone phosphate and D-glyceraldehyde (PubMed:10970798, PubMed:12205126, PubMed:20848650). Acts as an adapter independently of its enzymatic activity, exerts a tumor suppressor role by stabilizing the ternary complex with G6PD and TP53 to inhibit G6PD activity and keep oxidative pentose phosphate metabolism in check (PubMed:35122041).</text>
</comment>
<comment type="catalytic activity">
    <reaction evidence="5 6 11">
        <text>beta-D-fructose 1,6-bisphosphate = D-glyceraldehyde 3-phosphate + dihydroxyacetone phosphate</text>
        <dbReference type="Rhea" id="RHEA:14729"/>
        <dbReference type="ChEBI" id="CHEBI:32966"/>
        <dbReference type="ChEBI" id="CHEBI:57642"/>
        <dbReference type="ChEBI" id="CHEBI:59776"/>
        <dbReference type="EC" id="4.1.2.13"/>
    </reaction>
    <physiologicalReaction direction="left-to-right" evidence="21 22 23">
        <dbReference type="Rhea" id="RHEA:14730"/>
    </physiologicalReaction>
    <physiologicalReaction direction="right-to-left" evidence="20">
        <dbReference type="Rhea" id="RHEA:14731"/>
    </physiologicalReaction>
</comment>
<comment type="catalytic activity">
    <reaction evidence="5 6 11">
        <text>beta-D-fructose 1-phosphate = D-glyceraldehyde + dihydroxyacetone phosphate</text>
        <dbReference type="Rhea" id="RHEA:30851"/>
        <dbReference type="ChEBI" id="CHEBI:17378"/>
        <dbReference type="ChEBI" id="CHEBI:57642"/>
        <dbReference type="ChEBI" id="CHEBI:138881"/>
    </reaction>
    <physiologicalReaction direction="left-to-right" evidence="21 22 23">
        <dbReference type="Rhea" id="RHEA:30852"/>
    </physiologicalReaction>
    <physiologicalReaction direction="right-to-left" evidence="20">
        <dbReference type="Rhea" id="RHEA:30853"/>
    </physiologicalReaction>
</comment>
<comment type="biophysicochemical properties">
    <kinetics>
        <KM evidence="5">1.6 uM for fructose 1,6-bisphosphate</KM>
        <KM evidence="11">0.95 uM for fructose 1,6-bisphosphate</KM>
        <KM evidence="5">2.3 mM for fructose 1-phosphate</KM>
        <KM evidence="11">0.73 mM for fructose 1-phosphate</KM>
    </kinetics>
</comment>
<comment type="pathway">
    <text evidence="21 22 23">Carbohydrate degradation; glycolysis; D-glyceraldehyde 3-phosphate and glycerone phosphate from D-glucose: step 4/4.</text>
</comment>
<comment type="pathway">
    <text evidence="21 22 23">Carbohydrate biosynthesis; gluconeogenesis.</text>
</comment>
<comment type="pathway">
    <text evidence="5 6 11">Carbohydrate metabolism; fructose metabolism.</text>
</comment>
<comment type="subunit">
    <text evidence="9 15">Homotetramer. Interacts with BBS1, BBS2, BBS4 and BBS7 (PubMed:18000879). Forms a ternary complex with G6PD and TP53; this interaction is direct (PubMed:35122041).</text>
</comment>
<comment type="interaction">
    <interactant intactId="EBI-1045507">
        <id>P05062</id>
    </interactant>
    <interactant intactId="EBI-709613">
        <id>P04075</id>
        <label>ALDOA</label>
    </interactant>
    <organismsDiffer>false</organismsDiffer>
    <experiments>3</experiments>
</comment>
<comment type="interaction">
    <interactant intactId="EBI-1045507">
        <id>P05062</id>
    </interactant>
    <interactant intactId="EBI-1805484">
        <id>Q8NFJ9</id>
        <label>BBS1</label>
    </interactant>
    <organismsDiffer>false</organismsDiffer>
    <experiments>4</experiments>
</comment>
<comment type="interaction">
    <interactant intactId="EBI-1045507">
        <id>P05062</id>
    </interactant>
    <interactant intactId="EBI-748297">
        <id>Q9BXC9</id>
        <label>BBS2</label>
    </interactant>
    <organismsDiffer>false</organismsDiffer>
    <experiments>4</experiments>
</comment>
<comment type="interaction">
    <interactant intactId="EBI-1045507">
        <id>P05062</id>
    </interactant>
    <interactant intactId="EBI-1805814">
        <id>Q96RK4</id>
        <label>BBS4</label>
    </interactant>
    <organismsDiffer>false</organismsDiffer>
    <experiments>4</experiments>
</comment>
<comment type="interaction">
    <interactant intactId="EBI-1045507">
        <id>P05062</id>
    </interactant>
    <interactant intactId="EBI-1806001">
        <id>Q8IWZ6</id>
        <label>BBS7</label>
    </interactant>
    <organismsDiffer>false</organismsDiffer>
    <experiments>4</experiments>
</comment>
<comment type="subcellular location">
    <subcellularLocation>
        <location evidence="15">Cytoplasm</location>
        <location evidence="15">Cytosol</location>
    </subcellularLocation>
    <subcellularLocation>
        <location evidence="9">Cytoplasm</location>
        <location evidence="9">Cytoskeleton</location>
        <location evidence="9">Microtubule organizing center</location>
        <location evidence="9">Centrosome</location>
        <location evidence="9">Centriolar satellite</location>
    </subcellularLocation>
</comment>
<comment type="disease" evidence="4 5 6 7 8 10 11 12 14 17 18">
    <disease id="DI-01713">
        <name>Hereditary fructose intolerance</name>
        <acronym>HFI</acronym>
        <description>Autosomal recessive disease that results in an inability to metabolize fructose and related sugars. Complete exclusion of fructose results in dramatic recovery; however, if not treated properly, HFI subjects suffer episodes of hypoglycemia, general ill condition, and risk of death the remainder of life.</description>
        <dbReference type="MIM" id="229600"/>
    </disease>
    <text>The disease is caused by variants affecting the gene represented in this entry.</text>
</comment>
<comment type="miscellaneous">
    <text>In vertebrates, 3 forms of this ubiquitous glycolytic enzyme are found, aldolase A in muscle, aldolase B in liver and aldolase C in brain.</text>
</comment>
<comment type="similarity">
    <text evidence="20">Belongs to the class I fructose-bisphosphate aldolase family.</text>
</comment>
<comment type="online information" name="Atlas of Genetics and Cytogenetics in Oncology and Haematology">
    <link uri="https://atlasgeneticsoncology.org/gene/44287/ALDOB"/>
</comment>
<dbReference type="EC" id="4.1.2.13" evidence="5 6 11"/>
<dbReference type="EMBL" id="X02747">
    <property type="protein sequence ID" value="CAA26526.1"/>
    <property type="molecule type" value="mRNA"/>
</dbReference>
<dbReference type="EMBL" id="D00183">
    <property type="protein sequence ID" value="BAA00125.1"/>
    <property type="molecule type" value="Genomic_DNA"/>
</dbReference>
<dbReference type="EMBL" id="M15656">
    <property type="protein sequence ID" value="AAA51691.1"/>
    <property type="molecule type" value="Genomic_DNA"/>
</dbReference>
<dbReference type="EMBL" id="M15657">
    <property type="protein sequence ID" value="AAA51691.1"/>
    <property type="status" value="JOINED"/>
    <property type="molecule type" value="Genomic_DNA"/>
</dbReference>
<dbReference type="EMBL" id="AL353621">
    <property type="status" value="NOT_ANNOTATED_CDS"/>
    <property type="molecule type" value="Genomic_DNA"/>
</dbReference>
<dbReference type="EMBL" id="CH471105">
    <property type="protein sequence ID" value="EAW58951.1"/>
    <property type="molecule type" value="Genomic_DNA"/>
</dbReference>
<dbReference type="EMBL" id="X00270">
    <property type="protein sequence ID" value="CAA25072.1"/>
    <property type="molecule type" value="mRNA"/>
</dbReference>
<dbReference type="EMBL" id="X01098">
    <property type="protein sequence ID" value="CAA25572.1"/>
    <property type="molecule type" value="mRNA"/>
</dbReference>
<dbReference type="CCDS" id="CCDS6756.1"/>
<dbReference type="PIR" id="A41505">
    <property type="entry name" value="ADHUB"/>
</dbReference>
<dbReference type="RefSeq" id="NP_000026.2">
    <property type="nucleotide sequence ID" value="NM_000035.3"/>
</dbReference>
<dbReference type="PDB" id="1QO5">
    <property type="method" value="X-ray"/>
    <property type="resolution" value="2.50 A"/>
    <property type="chains" value="A/B/C/D/E/F/G/H/I/J/K/L/M/N/O/P/Q/R=2-364"/>
</dbReference>
<dbReference type="PDB" id="1XDL">
    <property type="method" value="X-ray"/>
    <property type="resolution" value="3.00 A"/>
    <property type="chains" value="A/B/C/D/W/X/Y/Z=2-364"/>
</dbReference>
<dbReference type="PDB" id="1XDM">
    <property type="method" value="X-ray"/>
    <property type="resolution" value="3.00 A"/>
    <property type="chains" value="A/B/C/D/W/X/Y/Z=2-364"/>
</dbReference>
<dbReference type="PDB" id="8D44">
    <property type="method" value="EM"/>
    <property type="resolution" value="2.80 A"/>
    <property type="chains" value="A/B/C/D=1-364"/>
</dbReference>
<dbReference type="PDBsum" id="1QO5"/>
<dbReference type="PDBsum" id="1XDL"/>
<dbReference type="PDBsum" id="1XDM"/>
<dbReference type="PDBsum" id="8D44"/>
<dbReference type="EMDB" id="EMD-27174"/>
<dbReference type="SMR" id="P05062"/>
<dbReference type="BioGRID" id="106730">
    <property type="interactions" value="42"/>
</dbReference>
<dbReference type="CORUM" id="P05062"/>
<dbReference type="FunCoup" id="P05062">
    <property type="interactions" value="801"/>
</dbReference>
<dbReference type="IntAct" id="P05062">
    <property type="interactions" value="33"/>
</dbReference>
<dbReference type="MINT" id="P05062"/>
<dbReference type="STRING" id="9606.ENSP00000497767"/>
<dbReference type="DrugBank" id="DB02512">
    <property type="generic name" value="1,6-Fructose Diphosphate (Linear Form)"/>
</dbReference>
<dbReference type="DrugBank" id="DB04326">
    <property type="generic name" value="Dihydroxyacetone phosphate"/>
</dbReference>
<dbReference type="DrugBank" id="DB02515">
    <property type="generic name" value="sn-glycerol 3-phosphate"/>
</dbReference>
<dbReference type="MoonDB" id="P05062">
    <property type="type" value="Curated"/>
</dbReference>
<dbReference type="GlyGen" id="P05062">
    <property type="glycosylation" value="1 site, 1 O-linked glycan (1 site)"/>
</dbReference>
<dbReference type="iPTMnet" id="P05062"/>
<dbReference type="PhosphoSitePlus" id="P05062"/>
<dbReference type="BioMuta" id="ALDOB"/>
<dbReference type="DMDM" id="113611"/>
<dbReference type="CPTAC" id="CPTAC-2720"/>
<dbReference type="jPOST" id="P05062"/>
<dbReference type="MassIVE" id="P05062"/>
<dbReference type="PaxDb" id="9606-ENSP00000363988"/>
<dbReference type="PeptideAtlas" id="P05062"/>
<dbReference type="ProteomicsDB" id="51773"/>
<dbReference type="Pumba" id="P05062"/>
<dbReference type="Antibodypedia" id="1025">
    <property type="antibodies" value="416 antibodies from 33 providers"/>
</dbReference>
<dbReference type="DNASU" id="229"/>
<dbReference type="Ensembl" id="ENST00000647789.2">
    <property type="protein sequence ID" value="ENSP00000497767.1"/>
    <property type="gene ID" value="ENSG00000136872.21"/>
</dbReference>
<dbReference type="Ensembl" id="ENST00000648064.1">
    <property type="protein sequence ID" value="ENSP00000497990.1"/>
    <property type="gene ID" value="ENSG00000136872.21"/>
</dbReference>
<dbReference type="Ensembl" id="ENST00000648758.1">
    <property type="protein sequence ID" value="ENSP00000497731.1"/>
    <property type="gene ID" value="ENSG00000136872.21"/>
</dbReference>
<dbReference type="GeneID" id="229"/>
<dbReference type="KEGG" id="hsa:229"/>
<dbReference type="MANE-Select" id="ENST00000647789.2">
    <property type="protein sequence ID" value="ENSP00000497767.1"/>
    <property type="RefSeq nucleotide sequence ID" value="NM_000035.4"/>
    <property type="RefSeq protein sequence ID" value="NP_000026.2"/>
</dbReference>
<dbReference type="UCSC" id="uc004bbk.3">
    <property type="organism name" value="human"/>
</dbReference>
<dbReference type="AGR" id="HGNC:417"/>
<dbReference type="CTD" id="229"/>
<dbReference type="DisGeNET" id="229"/>
<dbReference type="GeneCards" id="ALDOB"/>
<dbReference type="GeneReviews" id="ALDOB"/>
<dbReference type="HGNC" id="HGNC:417">
    <property type="gene designation" value="ALDOB"/>
</dbReference>
<dbReference type="HPA" id="ENSG00000136872">
    <property type="expression patterns" value="Group enriched (intestine, kidney, liver)"/>
</dbReference>
<dbReference type="MalaCards" id="ALDOB"/>
<dbReference type="MIM" id="229600">
    <property type="type" value="phenotype"/>
</dbReference>
<dbReference type="MIM" id="612724">
    <property type="type" value="gene"/>
</dbReference>
<dbReference type="neXtProt" id="NX_P05062"/>
<dbReference type="OpenTargets" id="ENSG00000136872"/>
<dbReference type="Orphanet" id="469">
    <property type="disease" value="Hereditary fructose intolerance"/>
</dbReference>
<dbReference type="PharmGKB" id="PA24710"/>
<dbReference type="VEuPathDB" id="HostDB:ENSG00000136872"/>
<dbReference type="eggNOG" id="KOG1557">
    <property type="taxonomic scope" value="Eukaryota"/>
</dbReference>
<dbReference type="GeneTree" id="ENSGT00950000182987"/>
<dbReference type="HOGENOM" id="CLU_031243_0_0_1"/>
<dbReference type="InParanoid" id="P05062"/>
<dbReference type="OMA" id="CKGQYVT"/>
<dbReference type="OrthoDB" id="36455at2759"/>
<dbReference type="PAN-GO" id="P05062">
    <property type="GO annotations" value="5 GO annotations based on evolutionary models"/>
</dbReference>
<dbReference type="PhylomeDB" id="P05062"/>
<dbReference type="TreeFam" id="TF314203"/>
<dbReference type="BioCyc" id="MetaCyc:HS06234-MONOMER"/>
<dbReference type="BRENDA" id="4.1.2.13">
    <property type="organism ID" value="2681"/>
</dbReference>
<dbReference type="PathwayCommons" id="P05062"/>
<dbReference type="Reactome" id="R-HSA-5657560">
    <property type="pathway name" value="Hereditary fructose intolerance"/>
</dbReference>
<dbReference type="Reactome" id="R-HSA-70171">
    <property type="pathway name" value="Glycolysis"/>
</dbReference>
<dbReference type="Reactome" id="R-HSA-70263">
    <property type="pathway name" value="Gluconeogenesis"/>
</dbReference>
<dbReference type="Reactome" id="R-HSA-70350">
    <property type="pathway name" value="Fructose catabolism"/>
</dbReference>
<dbReference type="SABIO-RK" id="P05062"/>
<dbReference type="SignaLink" id="P05062"/>
<dbReference type="SIGNOR" id="P05062"/>
<dbReference type="UniPathway" id="UPA00109">
    <property type="reaction ID" value="UER00183"/>
</dbReference>
<dbReference type="UniPathway" id="UPA00138"/>
<dbReference type="UniPathway" id="UPA00202"/>
<dbReference type="BioGRID-ORCS" id="229">
    <property type="hits" value="10 hits in 1149 CRISPR screens"/>
</dbReference>
<dbReference type="ChiTaRS" id="ALDOB">
    <property type="organism name" value="human"/>
</dbReference>
<dbReference type="EvolutionaryTrace" id="P05062"/>
<dbReference type="GeneWiki" id="Aldolase_B"/>
<dbReference type="GenomeRNAi" id="229"/>
<dbReference type="Pharos" id="P05062">
    <property type="development level" value="Tbio"/>
</dbReference>
<dbReference type="PRO" id="PR:P05062"/>
<dbReference type="Proteomes" id="UP000005640">
    <property type="component" value="Chromosome 9"/>
</dbReference>
<dbReference type="RNAct" id="P05062">
    <property type="molecule type" value="protein"/>
</dbReference>
<dbReference type="Bgee" id="ENSG00000136872">
    <property type="expression patterns" value="Expressed in jejunal mucosa and 142 other cell types or tissues"/>
</dbReference>
<dbReference type="ExpressionAtlas" id="P05062">
    <property type="expression patterns" value="baseline and differential"/>
</dbReference>
<dbReference type="GO" id="GO:0034451">
    <property type="term" value="C:centriolar satellite"/>
    <property type="evidence" value="ECO:0000314"/>
    <property type="project" value="BHF-UCL"/>
</dbReference>
<dbReference type="GO" id="GO:0005829">
    <property type="term" value="C:cytosol"/>
    <property type="evidence" value="ECO:0000314"/>
    <property type="project" value="UniProtKB"/>
</dbReference>
<dbReference type="GO" id="GO:0070062">
    <property type="term" value="C:extracellular exosome"/>
    <property type="evidence" value="ECO:0007005"/>
    <property type="project" value="UniProtKB"/>
</dbReference>
<dbReference type="GO" id="GO:0005815">
    <property type="term" value="C:microtubule organizing center"/>
    <property type="evidence" value="ECO:0000314"/>
    <property type="project" value="BHF-UCL"/>
</dbReference>
<dbReference type="GO" id="GO:0051117">
    <property type="term" value="F:ATPase binding"/>
    <property type="evidence" value="ECO:0000314"/>
    <property type="project" value="BHF-UCL"/>
</dbReference>
<dbReference type="GO" id="GO:0008092">
    <property type="term" value="F:cytoskeletal protein binding"/>
    <property type="evidence" value="ECO:0000314"/>
    <property type="project" value="BHF-UCL"/>
</dbReference>
<dbReference type="GO" id="GO:0070061">
    <property type="term" value="F:fructose binding"/>
    <property type="evidence" value="ECO:0000315"/>
    <property type="project" value="BHF-UCL"/>
</dbReference>
<dbReference type="GO" id="GO:0061609">
    <property type="term" value="F:fructose-1-phosphate aldolase activity"/>
    <property type="evidence" value="ECO:0000314"/>
    <property type="project" value="UniProtKB"/>
</dbReference>
<dbReference type="GO" id="GO:0004332">
    <property type="term" value="F:fructose-bisphosphate aldolase activity"/>
    <property type="evidence" value="ECO:0000314"/>
    <property type="project" value="UniProtKB"/>
</dbReference>
<dbReference type="GO" id="GO:0042802">
    <property type="term" value="F:identical protein binding"/>
    <property type="evidence" value="ECO:0000353"/>
    <property type="project" value="BHF-UCL"/>
</dbReference>
<dbReference type="GO" id="GO:0060090">
    <property type="term" value="F:molecular adaptor activity"/>
    <property type="evidence" value="ECO:0000314"/>
    <property type="project" value="UniProtKB"/>
</dbReference>
<dbReference type="GO" id="GO:0030388">
    <property type="term" value="P:fructose 1,6-bisphosphate metabolic process"/>
    <property type="evidence" value="ECO:0000314"/>
    <property type="project" value="BHF-UCL"/>
</dbReference>
<dbReference type="GO" id="GO:0061624">
    <property type="term" value="P:fructose catabolic process to hydroxyacetone phosphate and glyceraldehyde-3-phosphate"/>
    <property type="evidence" value="ECO:0007669"/>
    <property type="project" value="Ensembl"/>
</dbReference>
<dbReference type="GO" id="GO:0006000">
    <property type="term" value="P:fructose metabolic process"/>
    <property type="evidence" value="ECO:0000315"/>
    <property type="project" value="BHF-UCL"/>
</dbReference>
<dbReference type="GO" id="GO:0006094">
    <property type="term" value="P:gluconeogenesis"/>
    <property type="evidence" value="ECO:0007669"/>
    <property type="project" value="UniProtKB-UniPathway"/>
</dbReference>
<dbReference type="GO" id="GO:0006096">
    <property type="term" value="P:glycolytic process"/>
    <property type="evidence" value="ECO:0000314"/>
    <property type="project" value="UniProtKB"/>
</dbReference>
<dbReference type="GO" id="GO:1905856">
    <property type="term" value="P:negative regulation of pentose-phosphate shunt"/>
    <property type="evidence" value="ECO:0000315"/>
    <property type="project" value="UniProtKB"/>
</dbReference>
<dbReference type="GO" id="GO:0070072">
    <property type="term" value="P:vacuolar proton-transporting V-type ATPase complex assembly"/>
    <property type="evidence" value="ECO:0000315"/>
    <property type="project" value="BHF-UCL"/>
</dbReference>
<dbReference type="CDD" id="cd00948">
    <property type="entry name" value="FBP_aldolase_I_a"/>
    <property type="match status" value="1"/>
</dbReference>
<dbReference type="FunFam" id="3.20.20.70:FF:000021">
    <property type="entry name" value="Fructose-bisphosphate aldolase"/>
    <property type="match status" value="1"/>
</dbReference>
<dbReference type="Gene3D" id="3.20.20.70">
    <property type="entry name" value="Aldolase class I"/>
    <property type="match status" value="1"/>
</dbReference>
<dbReference type="InterPro" id="IPR029768">
    <property type="entry name" value="Aldolase_I_AS"/>
</dbReference>
<dbReference type="InterPro" id="IPR013785">
    <property type="entry name" value="Aldolase_TIM"/>
</dbReference>
<dbReference type="InterPro" id="IPR000741">
    <property type="entry name" value="FBA_I"/>
</dbReference>
<dbReference type="NCBIfam" id="NF033379">
    <property type="entry name" value="FrucBisAld_I"/>
    <property type="match status" value="1"/>
</dbReference>
<dbReference type="PANTHER" id="PTHR11627">
    <property type="entry name" value="FRUCTOSE-BISPHOSPHATE ALDOLASE"/>
    <property type="match status" value="1"/>
</dbReference>
<dbReference type="Pfam" id="PF00274">
    <property type="entry name" value="Glycolytic"/>
    <property type="match status" value="1"/>
</dbReference>
<dbReference type="SUPFAM" id="SSF51569">
    <property type="entry name" value="Aldolase"/>
    <property type="match status" value="1"/>
</dbReference>
<dbReference type="PROSITE" id="PS00158">
    <property type="entry name" value="ALDOLASE_CLASS_I"/>
    <property type="match status" value="1"/>
</dbReference>
<feature type="initiator methionine" description="Removed" evidence="3 13">
    <location>
        <position position="1"/>
    </location>
</feature>
<feature type="chain" id="PRO_0000216940" description="Fructose-bisphosphate aldolase B">
    <location>
        <begin position="2"/>
        <end position="364"/>
    </location>
</feature>
<feature type="active site" description="Proton acceptor" evidence="1">
    <location>
        <position position="188"/>
    </location>
</feature>
<feature type="active site" description="Schiff-base intermediate with dihydroxyacetone-P" evidence="1">
    <location>
        <position position="230"/>
    </location>
</feature>
<feature type="binding site" evidence="1">
    <location>
        <position position="43"/>
    </location>
    <ligand>
        <name>beta-D-fructose 1,6-bisphosphate</name>
        <dbReference type="ChEBI" id="CHEBI:32966"/>
    </ligand>
</feature>
<feature type="binding site" evidence="1">
    <location>
        <begin position="272"/>
        <end position="274"/>
    </location>
    <ligand>
        <name>beta-D-fructose 1,6-bisphosphate</name>
        <dbReference type="ChEBI" id="CHEBI:32966"/>
    </ligand>
</feature>
<feature type="binding site" evidence="1">
    <location>
        <position position="304"/>
    </location>
    <ligand>
        <name>beta-D-fructose 1,6-bisphosphate</name>
        <dbReference type="ChEBI" id="CHEBI:32966"/>
    </ligand>
</feature>
<feature type="site" description="Necessary for preference for fructose 1,6-bisphosphate over fructose 1-phosphate" evidence="1">
    <location>
        <position position="364"/>
    </location>
</feature>
<feature type="modified residue" description="N-acetylalanine" evidence="3">
    <location>
        <position position="2"/>
    </location>
</feature>
<feature type="modified residue" description="N6-succinyllysine" evidence="3">
    <location>
        <position position="13"/>
    </location>
</feature>
<feature type="modified residue" description="Phosphoserine" evidence="25">
    <location>
        <position position="36"/>
    </location>
</feature>
<feature type="modified residue" description="Phosphothreonine" evidence="25">
    <location>
        <position position="39"/>
    </location>
</feature>
<feature type="modified residue" description="Phosphoserine" evidence="25">
    <location>
        <position position="89"/>
    </location>
</feature>
<feature type="modified residue" description="Phosphothreonine" evidence="25">
    <location>
        <position position="119"/>
    </location>
</feature>
<feature type="modified residue" description="N6-succinyllysine" evidence="3">
    <location>
        <position position="121"/>
    </location>
</feature>
<feature type="modified residue" description="Phosphoserine" evidence="25">
    <location>
        <position position="132"/>
    </location>
</feature>
<feature type="modified residue" description="Phosphoserine" evidence="25">
    <location>
        <position position="272"/>
    </location>
</feature>
<feature type="modified residue" description="Phosphoserine" evidence="25">
    <location>
        <position position="276"/>
    </location>
</feature>
<feature type="modified residue" description="Phosphoserine" evidence="2">
    <location>
        <position position="299"/>
    </location>
</feature>
<feature type="modified residue" description="Phosphoserine" evidence="2">
    <location>
        <position position="301"/>
    </location>
</feature>
<feature type="modified residue" description="Phosphoserine" evidence="25">
    <location>
        <position position="309"/>
    </location>
</feature>
<feature type="modified residue" description="N6-succinyllysine" evidence="3">
    <location>
        <position position="317"/>
    </location>
</feature>
<feature type="sequence variant" id="VAR_075348" description="In HFI; reduced enzymatic activity; dbSNP:rs41281039." evidence="11">
    <original>R</original>
    <variation>W</variation>
    <location>
        <position position="46"/>
    </location>
</feature>
<feature type="sequence variant" id="VAR_020822" description="In HFI; affects proper folding; dbSNP:rs781023784." evidence="7">
    <original>I</original>
    <variation>T</variation>
    <location>
        <position position="74"/>
    </location>
</feature>
<feature type="sequence variant" id="VAR_020823" description="In HFI." evidence="7">
    <location>
        <begin position="120"/>
        <end position="121"/>
    </location>
</feature>
<feature type="sequence variant" id="VAR_038429" description="In dbSNP:rs10123355.">
    <original>R</original>
    <variation>S</variation>
    <location>
        <position position="134"/>
    </location>
</feature>
<feature type="sequence variant" id="VAR_000551" description="In HFI; America; partial activity." evidence="18">
    <original>C</original>
    <variation>R</variation>
    <location>
        <position position="135"/>
    </location>
</feature>
<feature type="sequence variant" id="VAR_000552" description="In one subject with fructose intolerance; rare variant; America; dbSNP:rs118204430." evidence="16">
    <original>W</original>
    <variation>R</variation>
    <location>
        <position position="148"/>
    </location>
</feature>
<feature type="sequence variant" id="VAR_000553" description="In HFI; frequent mutation; dbSNP:rs1800546." evidence="4 6 7 8 11 14">
    <original>A</original>
    <variation>P</variation>
    <location>
        <position position="150"/>
    </location>
</feature>
<feature type="sequence variant" id="VAR_000554" description="In HFI; frequent mutation; dbSNP:rs76917243." evidence="4 6 7 8 10 11">
    <original>A</original>
    <variation>D</variation>
    <location>
        <position position="175"/>
    </location>
</feature>
<feature type="sequence variant" id="VAR_058211" description="In HFI." evidence="8">
    <original>C</original>
    <variation>R</variation>
    <location>
        <position position="178"/>
    </location>
</feature>
<feature type="sequence variant" id="VAR_020824" description="In HFI." evidence="6">
    <original>P</original>
    <variation>R</variation>
    <location>
        <position position="185"/>
    </location>
</feature>
<feature type="sequence variant" id="VAR_020825" description="In dbSNP:rs3739721.">
    <original>E</original>
    <variation>Q</variation>
    <location>
        <position position="207"/>
    </location>
</feature>
<feature type="sequence variant" id="VAR_020826" description="In HFI; affects proper folding; dbSNP:rs1554702442." evidence="7">
    <original>V</original>
    <variation>F</variation>
    <location>
        <position position="222"/>
    </location>
</feature>
<feature type="sequence variant" id="VAR_020827" description="In HFI; affects proper folding; dbSNP:rs1554702433." evidence="7">
    <original>L</original>
    <variation>P</variation>
    <location>
        <position position="229"/>
    </location>
</feature>
<feature type="sequence variant" id="VAR_000555" description="In HFI; Italy; dbSNP:rs764701775." evidence="4 7 17">
    <original>L</original>
    <variation>P</variation>
    <location>
        <position position="257"/>
    </location>
</feature>
<feature type="sequence variant" id="VAR_038430" description="In dbSNP:rs10989495.">
    <original>I</original>
    <variation>N</variation>
    <location>
        <position position="268"/>
    </location>
</feature>
<feature type="sequence variant" id="VAR_058212" description="In HFI." evidence="8">
    <original>L</original>
    <variation>P</variation>
    <location>
        <position position="284"/>
    </location>
</feature>
<feature type="sequence variant" id="VAR_020828" description="In HFI; 100-fold decrease in catalytic efficiency for substrates F1,6BP and F1P; dbSNP:rs145078268." evidence="5">
    <original>R</original>
    <variation>Q</variation>
    <location>
        <position position="304"/>
    </location>
</feature>
<feature type="sequence variant" id="VAR_000556" description="In HFI; Turkey; 4800-fold decrease in catalytic efficiency for F1,6BP and inactive with F1P; dbSNP:rs555935217." evidence="4 5">
    <original>R</original>
    <variation>W</variation>
    <location>
        <position position="304"/>
    </location>
</feature>
<feature type="sequence variant" id="VAR_000557" description="In HFI; frequent mutation; dbSNP:rs78340951." evidence="4 6 7 8 12">
    <original>N</original>
    <variation>K</variation>
    <location>
        <position position="335"/>
    </location>
</feature>
<feature type="sequence variant" id="VAR_000558" description="In HFI; Turkey and South Europe; dbSNP:rs77718928." evidence="4 7">
    <original>A</original>
    <variation>V</variation>
    <location>
        <position position="338"/>
    </location>
</feature>
<feature type="sequence variant" id="VAR_075349" description="In HFI; almost no effect on enzymatic activity at 30 degrees Celsius, but reduced activity at higher temperatures; dbSNP:rs369586696." evidence="11">
    <original>Y</original>
    <variation>H</variation>
    <location>
        <position position="343"/>
    </location>
</feature>
<feature type="mutagenesis site" description="Loss of enzymatic activity. Retains the ability to interact with G6PD." evidence="15">
    <original>R</original>
    <variation>A</variation>
    <location>
        <position position="43"/>
    </location>
</feature>
<feature type="mutagenesis site" description="Decreases enzymatic activity. Retains the ability to interact with G6PD." evidence="15">
    <original>R</original>
    <variation>A</variation>
    <location>
        <position position="46"/>
    </location>
</feature>
<feature type="mutagenesis site" description="Decreases enzymatic activity. Retains the ability to interact with G6PD." evidence="15">
    <original>K</original>
    <variation>A</variation>
    <location>
        <position position="108"/>
    </location>
</feature>
<feature type="mutagenesis site" description="Loss of enzymatic activity. Impairs the interaction with G6PD." evidence="15">
    <original>K</original>
    <variation>A</variation>
    <location>
        <position position="147"/>
    </location>
</feature>
<feature type="mutagenesis site" description="Loss of enzymatic activity. Impairs the interaction with G6PD." evidence="15">
    <original>R</original>
    <variation>A</variation>
    <location>
        <position position="149"/>
    </location>
</feature>
<feature type="mutagenesis site" description="Loss of enzymatic activity. Impairs the interaction with G6PD." evidence="15">
    <original>K</original>
    <variation>A</variation>
    <location>
        <position position="230"/>
    </location>
</feature>
<feature type="mutagenesis site" description="Decreases enzymatic activity. Impairs the interaction with G6PD." evidence="15">
    <original>R</original>
    <variation>A</variation>
    <location>
        <position position="304"/>
    </location>
</feature>
<feature type="sequence conflict" description="In Ref. 5; AAA51691." evidence="20" ref="5">
    <original>E</original>
    <variation>D</variation>
    <location>
        <position position="54"/>
    </location>
</feature>
<feature type="sequence conflict" description="In Ref. 9; CAA25072." evidence="20" ref="9">
    <original>A</original>
    <variation>D</variation>
    <location>
        <position position="250"/>
    </location>
</feature>
<feature type="sequence conflict" description="In Ref. 4; BAA00125." evidence="20" ref="4">
    <original>E</original>
    <variation>D</variation>
    <location>
        <position position="278"/>
    </location>
</feature>
<feature type="sequence conflict" description="In Ref. 3; no nucleotide entry." evidence="20" ref="3">
    <original>S</original>
    <variation>V</variation>
    <location>
        <position position="309"/>
    </location>
</feature>
<feature type="sequence conflict" description="In Ref. 4; BAA00125." evidence="20" ref="4">
    <original>S</original>
    <variation>C</variation>
    <location>
        <position position="348"/>
    </location>
</feature>
<feature type="helix" evidence="26">
    <location>
        <begin position="10"/>
        <end position="23"/>
    </location>
</feature>
<feature type="turn" evidence="28">
    <location>
        <begin position="24"/>
        <end position="26"/>
    </location>
</feature>
<feature type="strand" evidence="26">
    <location>
        <begin position="29"/>
        <end position="33"/>
    </location>
</feature>
<feature type="helix" evidence="26">
    <location>
        <begin position="37"/>
        <end position="46"/>
    </location>
</feature>
<feature type="helix" evidence="26">
    <location>
        <begin position="53"/>
        <end position="64"/>
    </location>
</feature>
<feature type="helix" evidence="26">
    <location>
        <begin position="68"/>
        <end position="72"/>
    </location>
</feature>
<feature type="strand" evidence="26">
    <location>
        <begin position="74"/>
        <end position="79"/>
    </location>
</feature>
<feature type="helix" evidence="26">
    <location>
        <begin position="83"/>
        <end position="85"/>
    </location>
</feature>
<feature type="turn" evidence="27">
    <location>
        <begin position="89"/>
        <end position="91"/>
    </location>
</feature>
<feature type="helix" evidence="26">
    <location>
        <begin position="94"/>
        <end position="100"/>
    </location>
</feature>
<feature type="strand" evidence="26">
    <location>
        <begin position="104"/>
        <end position="108"/>
    </location>
</feature>
<feature type="strand" evidence="26">
    <location>
        <begin position="113"/>
        <end position="115"/>
    </location>
</feature>
<feature type="strand" evidence="26">
    <location>
        <begin position="119"/>
        <end position="121"/>
    </location>
</feature>
<feature type="strand" evidence="26">
    <location>
        <begin position="123"/>
        <end position="125"/>
    </location>
</feature>
<feature type="helix" evidence="26">
    <location>
        <begin position="131"/>
        <end position="140"/>
    </location>
</feature>
<feature type="strand" evidence="26">
    <location>
        <begin position="145"/>
        <end position="152"/>
    </location>
</feature>
<feature type="helix" evidence="26">
    <location>
        <begin position="161"/>
        <end position="179"/>
    </location>
</feature>
<feature type="turn" evidence="26">
    <location>
        <begin position="180"/>
        <end position="182"/>
    </location>
</feature>
<feature type="strand" evidence="26">
    <location>
        <begin position="184"/>
        <end position="191"/>
    </location>
</feature>
<feature type="helix" evidence="26">
    <location>
        <begin position="199"/>
        <end position="219"/>
    </location>
</feature>
<feature type="helix" evidence="26">
    <location>
        <begin position="224"/>
        <end position="226"/>
    </location>
</feature>
<feature type="helix" evidence="26">
    <location>
        <begin position="246"/>
        <end position="260"/>
    </location>
</feature>
<feature type="strand" evidence="26">
    <location>
        <begin position="267"/>
        <end position="271"/>
    </location>
</feature>
<feature type="helix" evidence="26">
    <location>
        <begin position="277"/>
        <end position="289"/>
    </location>
</feature>
<feature type="strand" evidence="27">
    <location>
        <begin position="290"/>
        <end position="292"/>
    </location>
</feature>
<feature type="strand" evidence="26">
    <location>
        <begin position="296"/>
        <end position="303"/>
    </location>
</feature>
<feature type="helix" evidence="26">
    <location>
        <begin position="304"/>
        <end position="306"/>
    </location>
</feature>
<feature type="helix" evidence="26">
    <location>
        <begin position="308"/>
        <end position="314"/>
    </location>
</feature>
<feature type="helix" evidence="26">
    <location>
        <begin position="318"/>
        <end position="320"/>
    </location>
</feature>
<feature type="helix" evidence="26">
    <location>
        <begin position="321"/>
        <end position="338"/>
    </location>
</feature>
<feature type="turn" evidence="26">
    <location>
        <begin position="339"/>
        <end position="341"/>
    </location>
</feature>
<feature type="helix" evidence="26">
    <location>
        <begin position="351"/>
        <end position="354"/>
    </location>
</feature>
<keyword id="KW-0002">3D-structure</keyword>
<keyword id="KW-0007">Acetylation</keyword>
<keyword id="KW-0963">Cytoplasm</keyword>
<keyword id="KW-0206">Cytoskeleton</keyword>
<keyword id="KW-0903">Direct protein sequencing</keyword>
<keyword id="KW-0225">Disease variant</keyword>
<keyword id="KW-0324">Glycolysis</keyword>
<keyword id="KW-0456">Lyase</keyword>
<keyword id="KW-0597">Phosphoprotein</keyword>
<keyword id="KW-1267">Proteomics identification</keyword>
<keyword id="KW-1185">Reference proteome</keyword>
<keyword id="KW-0704">Schiff base</keyword>
<gene>
    <name evidence="19 24" type="primary">ALDOB</name>
    <name type="synonym">ALDB</name>
</gene>
<name>ALDOB_HUMAN</name>
<reference key="1">
    <citation type="journal article" date="1984" name="Nucleic Acids Res.">
        <title>Isolation and nucleotide sequence of a full-length cDNA coding for aldolase B from human liver.</title>
        <authorList>
            <person name="Paolella G."/>
            <person name="Santamaria R."/>
            <person name="Izzo P."/>
            <person name="Costanzo P."/>
            <person name="Salvatore F."/>
        </authorList>
    </citation>
    <scope>NUCLEOTIDE SEQUENCE [MRNA]</scope>
</reference>
<reference key="2">
    <citation type="journal article" date="1985" name="Nucleic Acids Res.">
        <title>Human aldolase isozyme gene: the structure of multispecies aldolase B mRNAs.</title>
        <authorList>
            <person name="Sakakibara M."/>
            <person name="Mukai T."/>
            <person name="Yatsuki H."/>
            <person name="Hori K."/>
        </authorList>
    </citation>
    <scope>NUCLEOTIDE SEQUENCE [MRNA]</scope>
</reference>
<reference key="3">
    <citation type="journal article" date="1984" name="Proc. Natl. Acad. Sci. U.S.A.">
        <title>Complete amino acid sequence for human aldolase B derived from cDNA and genomic clones.</title>
        <authorList>
            <person name="Rottmann W.H."/>
            <person name="Tolan D.R."/>
            <person name="Penhoet E.E."/>
        </authorList>
    </citation>
    <scope>NUCLEOTIDE SEQUENCE [GENOMIC DNA / MRNA]</scope>
</reference>
<reference key="4">
    <citation type="journal article" date="1987" name="J. Biochem.">
        <title>Human aldolase B gene: characterization of the genomic aldolase B gene and analysis of sequences required for multiple polyadenylations.</title>
        <authorList>
            <person name="Mukai T."/>
            <person name="Yatsuki H."/>
            <person name="Arai Y."/>
            <person name="Joh K."/>
            <person name="Matsuhashi S."/>
            <person name="Hori K."/>
        </authorList>
    </citation>
    <scope>NUCLEOTIDE SEQUENCE [GENOMIC DNA]</scope>
</reference>
<reference key="5">
    <citation type="journal article" date="1986" name="Mol. Biol. Med.">
        <title>Characterization of the human aldolase B gene.</title>
        <authorList>
            <person name="Tolan D.R."/>
            <person name="Penhoet E.E."/>
        </authorList>
    </citation>
    <scope>NUCLEOTIDE SEQUENCE [GENOMIC DNA]</scope>
</reference>
<reference key="6">
    <citation type="journal article" date="2004" name="Nature">
        <title>DNA sequence and analysis of human chromosome 9.</title>
        <authorList>
            <person name="Humphray S.J."/>
            <person name="Oliver K."/>
            <person name="Hunt A.R."/>
            <person name="Plumb R.W."/>
            <person name="Loveland J.E."/>
            <person name="Howe K.L."/>
            <person name="Andrews T.D."/>
            <person name="Searle S."/>
            <person name="Hunt S.E."/>
            <person name="Scott C.E."/>
            <person name="Jones M.C."/>
            <person name="Ainscough R."/>
            <person name="Almeida J.P."/>
            <person name="Ambrose K.D."/>
            <person name="Ashwell R.I.S."/>
            <person name="Babbage A.K."/>
            <person name="Babbage S."/>
            <person name="Bagguley C.L."/>
            <person name="Bailey J."/>
            <person name="Banerjee R."/>
            <person name="Barker D.J."/>
            <person name="Barlow K.F."/>
            <person name="Bates K."/>
            <person name="Beasley H."/>
            <person name="Beasley O."/>
            <person name="Bird C.P."/>
            <person name="Bray-Allen S."/>
            <person name="Brown A.J."/>
            <person name="Brown J.Y."/>
            <person name="Burford D."/>
            <person name="Burrill W."/>
            <person name="Burton J."/>
            <person name="Carder C."/>
            <person name="Carter N.P."/>
            <person name="Chapman J.C."/>
            <person name="Chen Y."/>
            <person name="Clarke G."/>
            <person name="Clark S.Y."/>
            <person name="Clee C.M."/>
            <person name="Clegg S."/>
            <person name="Collier R.E."/>
            <person name="Corby N."/>
            <person name="Crosier M."/>
            <person name="Cummings A.T."/>
            <person name="Davies J."/>
            <person name="Dhami P."/>
            <person name="Dunn M."/>
            <person name="Dutta I."/>
            <person name="Dyer L.W."/>
            <person name="Earthrowl M.E."/>
            <person name="Faulkner L."/>
            <person name="Fleming C.J."/>
            <person name="Frankish A."/>
            <person name="Frankland J.A."/>
            <person name="French L."/>
            <person name="Fricker D.G."/>
            <person name="Garner P."/>
            <person name="Garnett J."/>
            <person name="Ghori J."/>
            <person name="Gilbert J.G.R."/>
            <person name="Glison C."/>
            <person name="Grafham D.V."/>
            <person name="Gribble S."/>
            <person name="Griffiths C."/>
            <person name="Griffiths-Jones S."/>
            <person name="Grocock R."/>
            <person name="Guy J."/>
            <person name="Hall R.E."/>
            <person name="Hammond S."/>
            <person name="Harley J.L."/>
            <person name="Harrison E.S.I."/>
            <person name="Hart E.A."/>
            <person name="Heath P.D."/>
            <person name="Henderson C.D."/>
            <person name="Hopkins B.L."/>
            <person name="Howard P.J."/>
            <person name="Howden P.J."/>
            <person name="Huckle E."/>
            <person name="Johnson C."/>
            <person name="Johnson D."/>
            <person name="Joy A.A."/>
            <person name="Kay M."/>
            <person name="Keenan S."/>
            <person name="Kershaw J.K."/>
            <person name="Kimberley A.M."/>
            <person name="King A."/>
            <person name="Knights A."/>
            <person name="Laird G.K."/>
            <person name="Langford C."/>
            <person name="Lawlor S."/>
            <person name="Leongamornlert D.A."/>
            <person name="Leversha M."/>
            <person name="Lloyd C."/>
            <person name="Lloyd D.M."/>
            <person name="Lovell J."/>
            <person name="Martin S."/>
            <person name="Mashreghi-Mohammadi M."/>
            <person name="Matthews L."/>
            <person name="McLaren S."/>
            <person name="McLay K.E."/>
            <person name="McMurray A."/>
            <person name="Milne S."/>
            <person name="Nickerson T."/>
            <person name="Nisbett J."/>
            <person name="Nordsiek G."/>
            <person name="Pearce A.V."/>
            <person name="Peck A.I."/>
            <person name="Porter K.M."/>
            <person name="Pandian R."/>
            <person name="Pelan S."/>
            <person name="Phillimore B."/>
            <person name="Povey S."/>
            <person name="Ramsey Y."/>
            <person name="Rand V."/>
            <person name="Scharfe M."/>
            <person name="Sehra H.K."/>
            <person name="Shownkeen R."/>
            <person name="Sims S.K."/>
            <person name="Skuce C.D."/>
            <person name="Smith M."/>
            <person name="Steward C.A."/>
            <person name="Swarbreck D."/>
            <person name="Sycamore N."/>
            <person name="Tester J."/>
            <person name="Thorpe A."/>
            <person name="Tracey A."/>
            <person name="Tromans A."/>
            <person name="Thomas D.W."/>
            <person name="Wall M."/>
            <person name="Wallis J.M."/>
            <person name="West A.P."/>
            <person name="Whitehead S.L."/>
            <person name="Willey D.L."/>
            <person name="Williams S.A."/>
            <person name="Wilming L."/>
            <person name="Wray P.W."/>
            <person name="Young L."/>
            <person name="Ashurst J.L."/>
            <person name="Coulson A."/>
            <person name="Blocker H."/>
            <person name="Durbin R.M."/>
            <person name="Sulston J.E."/>
            <person name="Hubbard T."/>
            <person name="Jackson M.J."/>
            <person name="Bentley D.R."/>
            <person name="Beck S."/>
            <person name="Rogers J."/>
            <person name="Dunham I."/>
        </authorList>
    </citation>
    <scope>NUCLEOTIDE SEQUENCE [LARGE SCALE GENOMIC DNA]</scope>
</reference>
<reference key="7">
    <citation type="submission" date="2005-07" db="EMBL/GenBank/DDBJ databases">
        <authorList>
            <person name="Mural R.J."/>
            <person name="Istrail S."/>
            <person name="Sutton G.G."/>
            <person name="Florea L."/>
            <person name="Halpern A.L."/>
            <person name="Mobarry C.M."/>
            <person name="Lippert R."/>
            <person name="Walenz B."/>
            <person name="Shatkay H."/>
            <person name="Dew I."/>
            <person name="Miller J.R."/>
            <person name="Flanigan M.J."/>
            <person name="Edwards N.J."/>
            <person name="Bolanos R."/>
            <person name="Fasulo D."/>
            <person name="Halldorsson B.V."/>
            <person name="Hannenhalli S."/>
            <person name="Turner R."/>
            <person name="Yooseph S."/>
            <person name="Lu F."/>
            <person name="Nusskern D.R."/>
            <person name="Shue B.C."/>
            <person name="Zheng X.H."/>
            <person name="Zhong F."/>
            <person name="Delcher A.L."/>
            <person name="Huson D.H."/>
            <person name="Kravitz S.A."/>
            <person name="Mouchard L."/>
            <person name="Reinert K."/>
            <person name="Remington K.A."/>
            <person name="Clark A.G."/>
            <person name="Waterman M.S."/>
            <person name="Eichler E.E."/>
            <person name="Adams M.D."/>
            <person name="Hunkapiller M.W."/>
            <person name="Myers E.W."/>
            <person name="Venter J.C."/>
        </authorList>
    </citation>
    <scope>NUCLEOTIDE SEQUENCE [LARGE SCALE GENOMIC DNA]</scope>
</reference>
<reference key="8">
    <citation type="journal article" date="1989" name="Biochim. Biophys. Acta">
        <title>Construction and expression of human aldolase A and B expression plasmids in Escherichia coli host.</title>
        <authorList>
            <person name="Sakakibara M."/>
            <person name="Takahashi I."/>
            <person name="Takasaki Y."/>
            <person name="Mukai T."/>
            <person name="Hori K."/>
        </authorList>
    </citation>
    <scope>PROTEIN SEQUENCE OF 2-33 AND 357-364</scope>
</reference>
<reference key="9">
    <citation type="journal article" date="1983" name="Biochem. Biophys. Res. Commun.">
        <title>Nucleotide sequence of a cDNA clone for human aldolase B.</title>
        <authorList>
            <person name="Besmond C."/>
            <person name="Dreyfus J.-C."/>
            <person name="Gregori C."/>
            <person name="Frain M."/>
            <person name="Zakin M.M."/>
            <person name="Sala Trepat J."/>
            <person name="Kahn A."/>
        </authorList>
    </citation>
    <scope>NUCLEOTIDE SEQUENCE [MRNA] OF 238-364</scope>
</reference>
<reference key="10">
    <citation type="journal article" date="2008" name="Cell Motil. Cytoskeleton">
        <title>Novel interaction partners of Bardet-Biedl syndrome proteins.</title>
        <authorList>
            <person name="Oeffner F."/>
            <person name="Moch C."/>
            <person name="Neundorf A."/>
            <person name="Hofmann J."/>
            <person name="Koch M."/>
            <person name="Grzeschik K.H."/>
        </authorList>
    </citation>
    <scope>INTERACTION WITH BBS1; BBS2; BBS4 AND BBS7</scope>
    <scope>SUBCELLULAR LOCATION</scope>
</reference>
<reference key="11">
    <citation type="journal article" date="2014" name="J. Proteomics">
        <title>An enzyme assisted RP-RPLC approach for in-depth analysis of human liver phosphoproteome.</title>
        <authorList>
            <person name="Bian Y."/>
            <person name="Song C."/>
            <person name="Cheng K."/>
            <person name="Dong M."/>
            <person name="Wang F."/>
            <person name="Huang J."/>
            <person name="Sun D."/>
            <person name="Wang L."/>
            <person name="Ye M."/>
            <person name="Zou H."/>
        </authorList>
    </citation>
    <scope>PHOSPHORYLATION [LARGE SCALE ANALYSIS] AT SER-36; THR-39; SER-89; THR-119; SER-132; SER-272; SER-276 AND SER-309</scope>
    <scope>IDENTIFICATION BY MASS SPECTROMETRY [LARGE SCALE ANALYSIS]</scope>
    <source>
        <tissue>Liver</tissue>
    </source>
</reference>
<reference key="12">
    <citation type="journal article" date="2020" name="Nat. Cancer">
        <title>Aldolase B suppresses hepatocellular carcinogenesis by inhibiting G6PD and pentose phosphate pathways.</title>
        <authorList>
            <person name="Li M."/>
            <person name="He X."/>
            <person name="Guo W."/>
            <person name="Yu H."/>
            <person name="Zhang S."/>
            <person name="Wang N."/>
            <person name="Liu G."/>
            <person name="Sa R."/>
            <person name="Shen X."/>
            <person name="Jiang Y."/>
            <person name="Tang Y."/>
            <person name="Zhuo Y."/>
            <person name="Yin C."/>
            <person name="Tu Q."/>
            <person name="Li N."/>
            <person name="Nie X."/>
            <person name="Li Y."/>
            <person name="Hu Z."/>
            <person name="Zhu H."/>
            <person name="Ding J."/>
            <person name="Li Z."/>
            <person name="Liu T."/>
            <person name="Zhang F."/>
            <person name="Zhou H."/>
            <person name="Li S."/>
            <person name="Yue J."/>
            <person name="Yan Z."/>
            <person name="Cheng S."/>
            <person name="Tao Y."/>
            <person name="Yin H."/>
        </authorList>
    </citation>
    <scope>FUNCTION</scope>
    <scope>SUBCELLULAR LOCATION</scope>
    <scope>INTERACTION WITH G6PD AND TP53</scope>
    <scope>MUTAGENESIS OF ARG-43; ARG-46; LYS-108; LYS-147; ARG-149; LYS-230 AND ARG-304</scope>
</reference>
<reference key="13">
    <citation type="journal article" date="2001" name="Acta Crystallogr. D">
        <title>The structure of human liver fructose-1,6-bisphosphate aldolase.</title>
        <authorList>
            <person name="Dalby A.R."/>
            <person name="Tolan D.R."/>
            <person name="Littlechild J.A."/>
        </authorList>
    </citation>
    <scope>X-RAY CRYSTALLOGRAPHY (2.5 ANGSTROMS)</scope>
</reference>
<reference key="14">
    <citation type="journal article" date="1995" name="Hum. Mutat.">
        <title>Molecular basis of hereditary fructose intolerance: mutations and polymorphisms in the human aldolase B gene.</title>
        <authorList>
            <person name="Tolan D.R."/>
        </authorList>
    </citation>
    <scope>REVIEW ON VARIANTS</scope>
</reference>
<reference key="15">
    <citation type="journal article" date="1988" name="Cell">
        <title>Catalytic deficiency of human aldolase B in hereditary fructose intolerance caused by a common missense mutation.</title>
        <authorList>
            <person name="Cross N.C.P."/>
            <person name="Tolan D.R."/>
            <person name="Cox T.M."/>
        </authorList>
    </citation>
    <scope>VARIANT HFI PRO-150</scope>
</reference>
<reference key="16">
    <citation type="journal article" date="1990" name="Lancet">
        <title>Molecular analysis of aldolase B genes in hereditary fructose intolerance.</title>
        <authorList>
            <person name="Cross N.C.P."/>
            <person name="de Franchis R."/>
            <person name="Sebastio G."/>
            <person name="Dazzo C."/>
            <person name="Tolan D.R."/>
            <person name="Gregori C."/>
            <person name="Odievre M."/>
            <person name="Vidailhet M."/>
            <person name="Romano V."/>
            <person name="Mascali G."/>
            <person name="Romano C."/>
            <person name="Musumeci S."/>
            <person name="Steinmann B."/>
            <person name="Gitzelmann R."/>
            <person name="Cox T.M."/>
        </authorList>
    </citation>
    <scope>VARIANT HFI ASP-175</scope>
</reference>
<reference key="17">
    <citation type="journal article" date="1994" name="FASEB J.">
        <title>A partially active mutant aldolase B from a patient with hereditary fructose intolerance.</title>
        <authorList>
            <person name="Brooks C.C."/>
            <person name="Tolan D.R."/>
        </authorList>
    </citation>
    <scope>VARIANT HFI ARG-135</scope>
</reference>
<reference key="18">
    <citation type="journal article" date="1995" name="Am. J. Hum. Genet.">
        <title>Diverse mutations in the aldolase B gene that underlie the prevalence of hereditary fructose intolerance.</title>
        <authorList>
            <person name="Ali M."/>
            <person name="Cox T.M."/>
        </authorList>
    </citation>
    <scope>VARIANT ARG-148</scope>
</reference>
<reference key="19">
    <citation type="journal article" date="1994" name="Hum. Mol. Genet.">
        <title>Identification of a novel mutation (Leu 256--&gt;Pro) in the human aldolase B gene associated with hereditary fructose intolerance.</title>
        <authorList>
            <person name="Ali M."/>
            <person name="Sebastio G."/>
            <person name="Cox T.M."/>
        </authorList>
    </citation>
    <scope>VARIANT HFI PRO-257</scope>
</reference>
<reference key="20">
    <citation type="journal article" date="1990" name="Nucleic Acids Res.">
        <title>A new aldolase B variant, N334K, is a common cause of hereditary fructose intolerance in Yugoslavia.</title>
        <authorList>
            <person name="Cross N.C.P."/>
            <person name="Stojanov L.M."/>
            <person name="Cox T.M."/>
        </authorList>
    </citation>
    <scope>VARIANT HFI LYS-335</scope>
</reference>
<reference key="21">
    <citation type="journal article" date="1999" name="Mol. Cell. Probes">
        <title>Screening for hereditary fructose intolerance mutations by reverse dot-blot.</title>
        <authorList>
            <person name="Lau J."/>
            <person name="Tolan D.R."/>
        </authorList>
    </citation>
    <scope>VARIANTS HFI PRO-150; ASP-175; PRO-257; TRP-304; LYS-335 AND VAL-338</scope>
</reference>
<reference key="22">
    <citation type="journal article" date="2000" name="Biochem. J.">
        <title>Functional and molecular modelling studies of two hereditary fructose intolerance-causing mutations at arginine 303 in human liver aldolase.</title>
        <authorList>
            <person name="Santamaria R."/>
            <person name="Esposito G."/>
            <person name="Vitagliano L."/>
            <person name="Race V."/>
            <person name="Paglionico I."/>
            <person name="Zancan L."/>
            <person name="Zagari A."/>
            <person name="Salvatore F."/>
        </authorList>
    </citation>
    <scope>VARIANTS HFI GLN-304 AND TRP-304</scope>
    <scope>CHARACTERIZATION OF VARIANTS HFI GLN-304 AND TRP-304</scope>
    <scope>FUNCTION</scope>
    <scope>CATALYTIC ACTIVITY</scope>
    <scope>BIOPHYSICOCHEMICAL PROPERTIES</scope>
    <scope>PATHWAY</scope>
</reference>
<reference key="23">
    <citation type="journal article" date="2002" name="J. Med. Genet.">
        <title>Molecular analysis of the aldolase B gene in patients with hereditary fructose intolerance from Spain.</title>
        <authorList>
            <person name="Sanchez-Gutierrez J.C."/>
            <person name="Benlloch T."/>
            <person name="Leal M.A."/>
            <person name="Samper B."/>
            <person name="Garcia-Ripoll I."/>
            <person name="Feliu J.E."/>
        </authorList>
    </citation>
    <scope>VARIANTS HFI PRO-150; ASP-175; ARG-185 AND LYS-335</scope>
    <scope>FUNCTION</scope>
    <scope>CATALYTIC ACTIVITY</scope>
    <scope>PATHWAY</scope>
</reference>
<reference key="24">
    <citation type="journal article" date="2004" name="Hum. Mutat.">
        <title>Six novel alleles identified in Italian hereditary fructose intolerance patients enlarge the mutation spectrum of the aldolase B gene.</title>
        <authorList>
            <person name="Esposito G."/>
            <person name="Santamaria R."/>
            <person name="Vitagliano L."/>
            <person name="Ieno L."/>
            <person name="Viola A."/>
            <person name="Fiori L."/>
            <person name="Parenti G."/>
            <person name="Zancan L."/>
            <person name="Zagari A."/>
            <person name="Salvatore F."/>
        </authorList>
    </citation>
    <scope>VARIANTS HFI THR-74; 120-ASN-LYS-121 DEL; PRO-150; ASP-175; PHE-222; PRO-229; PRO-257; LYS-335 AND VAL-338</scope>
    <scope>CHARACTERIZATION OF VARIANTS HFI THR-74; PHE-222 AND PRO-229</scope>
</reference>
<reference key="25">
    <citation type="journal article" date="2005" name="Hum. Mutat.">
        <title>The spectrum of aldolase B (ALDOB) mutations and the prevalence of hereditary fructose intolerance in Central Europe.</title>
        <authorList>
            <person name="Santer R."/>
            <person name="Rischewski J."/>
            <person name="von Weihe M."/>
            <person name="Niederhaus M."/>
            <person name="Schneppenheim S."/>
            <person name="Baerlocher K."/>
            <person name="Kohlschuetter A."/>
            <person name="Muntau A."/>
            <person name="Posselt H.-G."/>
            <person name="Steinmann B."/>
            <person name="Schneppenheim R."/>
        </authorList>
    </citation>
    <scope>VARIANTS HFI PRO-150; ASP-175; ARG-178; PRO-284 AND LYS-335</scope>
</reference>
<reference key="26">
    <citation type="journal article" date="2010" name="Hum. Mutat.">
        <title>Hereditary fructose intolerance: functional study of two novel ALDOB natural variants and characterization of a partial gene deletion.</title>
        <authorList>
            <person name="Esposito G."/>
            <person name="Imperato M.R."/>
            <person name="Ieno L."/>
            <person name="Sorvillo R."/>
            <person name="Benigno V."/>
            <person name="Parenti G."/>
            <person name="Parini R."/>
            <person name="Vitagliano L."/>
            <person name="Zagari A."/>
            <person name="Salvatore F."/>
        </authorList>
    </citation>
    <scope>VARIANTS HFI TRP-46; PRO-150; ASP-175 AND HIS-343</scope>
    <scope>CHARACTERIZATION OF VARIANTS HFI TRP-46 AND HIS-343</scope>
    <scope>FUNCTION</scope>
    <scope>CATALYTIC ACTIVITY</scope>
    <scope>BIOPHYSICOCHEMICAL PROPERTIES</scope>
    <scope>PATHWAY</scope>
</reference>
<accession>P05062</accession>
<accession>Q13741</accession>
<accession>Q13742</accession>
<accession>Q5T7D6</accession>
<proteinExistence type="evidence at protein level"/>
<evidence type="ECO:0000250" key="1">
    <source>
        <dbReference type="UniProtKB" id="P00883"/>
    </source>
</evidence>
<evidence type="ECO:0000250" key="2">
    <source>
        <dbReference type="UniProtKB" id="P00884"/>
    </source>
</evidence>
<evidence type="ECO:0000250" key="3">
    <source>
        <dbReference type="UniProtKB" id="Q91Y97"/>
    </source>
</evidence>
<evidence type="ECO:0000269" key="4">
    <source>
    </source>
</evidence>
<evidence type="ECO:0000269" key="5">
    <source>
    </source>
</evidence>
<evidence type="ECO:0000269" key="6">
    <source>
    </source>
</evidence>
<evidence type="ECO:0000269" key="7">
    <source>
    </source>
</evidence>
<evidence type="ECO:0000269" key="8">
    <source>
    </source>
</evidence>
<evidence type="ECO:0000269" key="9">
    <source>
    </source>
</evidence>
<evidence type="ECO:0000269" key="10">
    <source>
    </source>
</evidence>
<evidence type="ECO:0000269" key="11">
    <source>
    </source>
</evidence>
<evidence type="ECO:0000269" key="12">
    <source>
    </source>
</evidence>
<evidence type="ECO:0000269" key="13">
    <source>
    </source>
</evidence>
<evidence type="ECO:0000269" key="14">
    <source>
    </source>
</evidence>
<evidence type="ECO:0000269" key="15">
    <source>
    </source>
</evidence>
<evidence type="ECO:0000269" key="16">
    <source>
    </source>
</evidence>
<evidence type="ECO:0000269" key="17">
    <source>
    </source>
</evidence>
<evidence type="ECO:0000269" key="18">
    <source>
    </source>
</evidence>
<evidence type="ECO:0000303" key="19">
    <source>
    </source>
</evidence>
<evidence type="ECO:0000305" key="20"/>
<evidence type="ECO:0000305" key="21">
    <source>
    </source>
</evidence>
<evidence type="ECO:0000305" key="22">
    <source>
    </source>
</evidence>
<evidence type="ECO:0000305" key="23">
    <source>
    </source>
</evidence>
<evidence type="ECO:0000312" key="24">
    <source>
        <dbReference type="HGNC" id="HGNC:417"/>
    </source>
</evidence>
<evidence type="ECO:0007744" key="25">
    <source>
    </source>
</evidence>
<evidence type="ECO:0007829" key="26">
    <source>
        <dbReference type="PDB" id="1QO5"/>
    </source>
</evidence>
<evidence type="ECO:0007829" key="27">
    <source>
        <dbReference type="PDB" id="1XDM"/>
    </source>
</evidence>
<evidence type="ECO:0007829" key="28">
    <source>
        <dbReference type="PDB" id="8D44"/>
    </source>
</evidence>
<sequence length="364" mass="39473">MAHRFPALTQEQKKELSEIAQSIVANGKGILAADESVGTMGNRLQRIKVENTEENRRQFREILFSVDSSINQSIGGVILFHETLYQKDSQGKLFRNILKEKGIVVGIKLDQGGAPLAGTNKETTIQGLDGLSERCAQYKKDGVDFGKWRAVLRIADQCPSSLAIQENANALARYASICQQNGLVPIVEPEVIPDGDHDLEHCQYVTEKVLAAVYKALNDHHVYLEGTLLKPNMVTAGHACTKKYTPEQVAMATVTALHRTVPAAVPGICFLSGGMSEEDATLNLNAINLCPLPKPWKLSFSYGRALQASALAAWGGKAANKEATQEAFMKRAMANCQAAKGQYVHTGSSGAASTQSLFTACYTY</sequence>